<accession>B2S5Y4</accession>
<organism>
    <name type="scientific">Brucella abortus (strain S19)</name>
    <dbReference type="NCBI Taxonomy" id="430066"/>
    <lineage>
        <taxon>Bacteria</taxon>
        <taxon>Pseudomonadati</taxon>
        <taxon>Pseudomonadota</taxon>
        <taxon>Alphaproteobacteria</taxon>
        <taxon>Hyphomicrobiales</taxon>
        <taxon>Brucellaceae</taxon>
        <taxon>Brucella/Ochrobactrum group</taxon>
        <taxon>Brucella</taxon>
    </lineage>
</organism>
<protein>
    <recommendedName>
        <fullName evidence="1">2-dehydro-3-deoxyphosphooctonate aldolase</fullName>
        <ecNumber evidence="1">2.5.1.55</ecNumber>
    </recommendedName>
    <alternativeName>
        <fullName evidence="1">3-deoxy-D-manno-octulosonic acid 8-phosphate synthase</fullName>
    </alternativeName>
    <alternativeName>
        <fullName evidence="1">KDO-8-phosphate synthase</fullName>
        <shortName evidence="1">KDO 8-P synthase</shortName>
        <shortName evidence="1">KDOPS</shortName>
    </alternativeName>
    <alternativeName>
        <fullName evidence="1">Phospho-2-dehydro-3-deoxyoctonate aldolase</fullName>
    </alternativeName>
</protein>
<sequence>MVTANSTVKVGNVTFSNSAPLALIAGPCQMETRDHAFEMAGRLKEMTDKLGIGLVYKSSFDKANRTSLKAARGIGLEKALEVFSDLKKEYGFPVLTDIHTEEQCAAVAPVVDVLQIPAFLCRQTDLLIAAARTGRVVNVKKGQFLAPWDMKNVLAKITESGNPNVLATERGVSFGYNTLVSDMRALPIMAGLGAPVIFDATHSVQQPGGQGGSTGGQREFVETLARAAVAVGVAGFFIETHEDPDNAPSDGPNMVPIDKMPALLEKLMAFDRIAKAL</sequence>
<gene>
    <name evidence="1" type="primary">kdsA</name>
    <name type="ordered locus">BAbS19_I10740</name>
</gene>
<proteinExistence type="inferred from homology"/>
<feature type="chain" id="PRO_1000091799" description="2-dehydro-3-deoxyphosphooctonate aldolase">
    <location>
        <begin position="1"/>
        <end position="277"/>
    </location>
</feature>
<comment type="catalytic activity">
    <reaction evidence="1">
        <text>D-arabinose 5-phosphate + phosphoenolpyruvate + H2O = 3-deoxy-alpha-D-manno-2-octulosonate-8-phosphate + phosphate</text>
        <dbReference type="Rhea" id="RHEA:14053"/>
        <dbReference type="ChEBI" id="CHEBI:15377"/>
        <dbReference type="ChEBI" id="CHEBI:43474"/>
        <dbReference type="ChEBI" id="CHEBI:57693"/>
        <dbReference type="ChEBI" id="CHEBI:58702"/>
        <dbReference type="ChEBI" id="CHEBI:85985"/>
        <dbReference type="EC" id="2.5.1.55"/>
    </reaction>
</comment>
<comment type="pathway">
    <text evidence="1">Carbohydrate biosynthesis; 3-deoxy-D-manno-octulosonate biosynthesis; 3-deoxy-D-manno-octulosonate from D-ribulose 5-phosphate: step 2/3.</text>
</comment>
<comment type="pathway">
    <text evidence="1">Bacterial outer membrane biogenesis; lipopolysaccharide biosynthesis.</text>
</comment>
<comment type="subcellular location">
    <subcellularLocation>
        <location evidence="1">Cytoplasm</location>
    </subcellularLocation>
</comment>
<comment type="similarity">
    <text evidence="1">Belongs to the KdsA family.</text>
</comment>
<reference key="1">
    <citation type="journal article" date="2008" name="PLoS ONE">
        <title>Genome sequence of Brucella abortus vaccine strain S19 compared to virulent strains yields candidate virulence genes.</title>
        <authorList>
            <person name="Crasta O.R."/>
            <person name="Folkerts O."/>
            <person name="Fei Z."/>
            <person name="Mane S.P."/>
            <person name="Evans C."/>
            <person name="Martino-Catt S."/>
            <person name="Bricker B."/>
            <person name="Yu G."/>
            <person name="Du L."/>
            <person name="Sobral B.W."/>
        </authorList>
    </citation>
    <scope>NUCLEOTIDE SEQUENCE [LARGE SCALE GENOMIC DNA]</scope>
    <source>
        <strain>S19</strain>
    </source>
</reference>
<dbReference type="EC" id="2.5.1.55" evidence="1"/>
<dbReference type="EMBL" id="CP000887">
    <property type="protein sequence ID" value="ACD72581.1"/>
    <property type="molecule type" value="Genomic_DNA"/>
</dbReference>
<dbReference type="RefSeq" id="WP_002966843.1">
    <property type="nucleotide sequence ID" value="NC_010742.1"/>
</dbReference>
<dbReference type="SMR" id="B2S5Y4"/>
<dbReference type="GeneID" id="93016530"/>
<dbReference type="KEGG" id="bmc:BAbS19_I10740"/>
<dbReference type="HOGENOM" id="CLU_036666_0_0_5"/>
<dbReference type="UniPathway" id="UPA00030"/>
<dbReference type="UniPathway" id="UPA00357">
    <property type="reaction ID" value="UER00474"/>
</dbReference>
<dbReference type="Proteomes" id="UP000002565">
    <property type="component" value="Chromosome 1"/>
</dbReference>
<dbReference type="GO" id="GO:0005737">
    <property type="term" value="C:cytoplasm"/>
    <property type="evidence" value="ECO:0007669"/>
    <property type="project" value="UniProtKB-SubCell"/>
</dbReference>
<dbReference type="GO" id="GO:0008676">
    <property type="term" value="F:3-deoxy-8-phosphooctulonate synthase activity"/>
    <property type="evidence" value="ECO:0007669"/>
    <property type="project" value="UniProtKB-UniRule"/>
</dbReference>
<dbReference type="GO" id="GO:0019294">
    <property type="term" value="P:keto-3-deoxy-D-manno-octulosonic acid biosynthetic process"/>
    <property type="evidence" value="ECO:0007669"/>
    <property type="project" value="UniProtKB-UniRule"/>
</dbReference>
<dbReference type="Gene3D" id="3.20.20.70">
    <property type="entry name" value="Aldolase class I"/>
    <property type="match status" value="1"/>
</dbReference>
<dbReference type="HAMAP" id="MF_00056">
    <property type="entry name" value="KDO8P_synth"/>
    <property type="match status" value="1"/>
</dbReference>
<dbReference type="InterPro" id="IPR013785">
    <property type="entry name" value="Aldolase_TIM"/>
</dbReference>
<dbReference type="InterPro" id="IPR006218">
    <property type="entry name" value="DAHP1/KDSA"/>
</dbReference>
<dbReference type="InterPro" id="IPR006269">
    <property type="entry name" value="KDO8P_synthase"/>
</dbReference>
<dbReference type="NCBIfam" id="TIGR01362">
    <property type="entry name" value="KDO8P_synth"/>
    <property type="match status" value="1"/>
</dbReference>
<dbReference type="NCBIfam" id="NF003543">
    <property type="entry name" value="PRK05198.1"/>
    <property type="match status" value="1"/>
</dbReference>
<dbReference type="PANTHER" id="PTHR21057">
    <property type="entry name" value="PHOSPHO-2-DEHYDRO-3-DEOXYHEPTONATE ALDOLASE"/>
    <property type="match status" value="1"/>
</dbReference>
<dbReference type="Pfam" id="PF00793">
    <property type="entry name" value="DAHP_synth_1"/>
    <property type="match status" value="1"/>
</dbReference>
<dbReference type="SUPFAM" id="SSF51569">
    <property type="entry name" value="Aldolase"/>
    <property type="match status" value="1"/>
</dbReference>
<evidence type="ECO:0000255" key="1">
    <source>
        <dbReference type="HAMAP-Rule" id="MF_00056"/>
    </source>
</evidence>
<keyword id="KW-0963">Cytoplasm</keyword>
<keyword id="KW-0448">Lipopolysaccharide biosynthesis</keyword>
<keyword id="KW-0808">Transferase</keyword>
<name>KDSA_BRUA1</name>